<sequence length="467" mass="52100">MVQLNQKFINSIAQEMPPHLSMDDFVHYCGLPLRLSIRVNTLKITSDALRAILEPRGWQFEPVPWCEDGFWVTVPDDCQPGNLTEHYQGLFYIQEASSMMPPCALFMDKEPRQLLLDVASAPGSKTTQLAALMHNQGLIIANEYSASRTKALHANLQRMGVANVAITQFDGRVFGAHLYETLDAIQLDAPCSGEGTVRKDPLSLKNWCPDEIEAIAELQRDLIDSAFQALKPGGVLVYSTCTLNRRENEDVCHFLKERYGDAVVFESLNDLFKGADKALTEEGFLHIWPQIYDSEGFFVARIRKTASVARNTDDPRFVSKFPFVAANRKELSALEEAMLALGVSLPEDAVIVTRDGEFWLMPAPLDGLLTKMRFQRIGIRLAETQKHGIKVRHEAVMALPCNQMLSIEPEAAKQYLMGRDIALDNAGKAQGEKILSLHGAPLGIAKHLGNKLKNSLPRDLCRDNVQN</sequence>
<protein>
    <recommendedName>
        <fullName evidence="1">Ribosomal RNA small subunit methyltransferase F</fullName>
        <ecNumber evidence="1">2.1.1.178</ecNumber>
    </recommendedName>
    <alternativeName>
        <fullName evidence="1">16S rRNA m5C1407 methyltransferase</fullName>
    </alternativeName>
    <alternativeName>
        <fullName evidence="1">rRNA (cytosine-C(5)-)-methyltransferase RsmF</fullName>
    </alternativeName>
</protein>
<name>RSMF_SHEAM</name>
<comment type="function">
    <text evidence="1">Specifically methylates the cytosine at position 1407 (m5C1407) of 16S rRNA.</text>
</comment>
<comment type="catalytic activity">
    <reaction evidence="1">
        <text>cytidine(1407) in 16S rRNA + S-adenosyl-L-methionine = 5-methylcytidine(1407) in 16S rRNA + S-adenosyl-L-homocysteine + H(+)</text>
        <dbReference type="Rhea" id="RHEA:42756"/>
        <dbReference type="Rhea" id="RHEA-COMP:10223"/>
        <dbReference type="Rhea" id="RHEA-COMP:10224"/>
        <dbReference type="ChEBI" id="CHEBI:15378"/>
        <dbReference type="ChEBI" id="CHEBI:57856"/>
        <dbReference type="ChEBI" id="CHEBI:59789"/>
        <dbReference type="ChEBI" id="CHEBI:74483"/>
        <dbReference type="ChEBI" id="CHEBI:82748"/>
        <dbReference type="EC" id="2.1.1.178"/>
    </reaction>
</comment>
<comment type="subcellular location">
    <subcellularLocation>
        <location evidence="1">Cytoplasm</location>
    </subcellularLocation>
</comment>
<comment type="similarity">
    <text evidence="1">Belongs to the class I-like SAM-binding methyltransferase superfamily. RsmB/NOP family.</text>
</comment>
<feature type="chain" id="PRO_0000285009" description="Ribosomal RNA small subunit methyltransferase F">
    <location>
        <begin position="1"/>
        <end position="467"/>
    </location>
</feature>
<feature type="active site" description="Nucleophile" evidence="1">
    <location>
        <position position="241"/>
    </location>
</feature>
<feature type="binding site" evidence="1">
    <location>
        <begin position="119"/>
        <end position="125"/>
    </location>
    <ligand>
        <name>S-adenosyl-L-methionine</name>
        <dbReference type="ChEBI" id="CHEBI:59789"/>
    </ligand>
</feature>
<feature type="binding site" evidence="1">
    <location>
        <position position="143"/>
    </location>
    <ligand>
        <name>S-adenosyl-L-methionine</name>
        <dbReference type="ChEBI" id="CHEBI:59789"/>
    </ligand>
</feature>
<feature type="binding site" evidence="1">
    <location>
        <position position="170"/>
    </location>
    <ligand>
        <name>S-adenosyl-L-methionine</name>
        <dbReference type="ChEBI" id="CHEBI:59789"/>
    </ligand>
</feature>
<feature type="binding site" evidence="1">
    <location>
        <position position="188"/>
    </location>
    <ligand>
        <name>S-adenosyl-L-methionine</name>
        <dbReference type="ChEBI" id="CHEBI:59789"/>
    </ligand>
</feature>
<gene>
    <name evidence="1" type="primary">rsmF</name>
    <name type="ordered locus">Sama_2039</name>
</gene>
<dbReference type="EC" id="2.1.1.178" evidence="1"/>
<dbReference type="EMBL" id="CP000507">
    <property type="protein sequence ID" value="ABM00245.1"/>
    <property type="molecule type" value="Genomic_DNA"/>
</dbReference>
<dbReference type="RefSeq" id="WP_011760152.1">
    <property type="nucleotide sequence ID" value="NC_008700.1"/>
</dbReference>
<dbReference type="SMR" id="A1S788"/>
<dbReference type="STRING" id="326297.Sama_2039"/>
<dbReference type="KEGG" id="saz:Sama_2039"/>
<dbReference type="eggNOG" id="COG0144">
    <property type="taxonomic scope" value="Bacteria"/>
</dbReference>
<dbReference type="eggNOG" id="COG3270">
    <property type="taxonomic scope" value="Bacteria"/>
</dbReference>
<dbReference type="HOGENOM" id="CLU_005316_6_2_6"/>
<dbReference type="OrthoDB" id="9810297at2"/>
<dbReference type="Proteomes" id="UP000009175">
    <property type="component" value="Chromosome"/>
</dbReference>
<dbReference type="GO" id="GO:0005737">
    <property type="term" value="C:cytoplasm"/>
    <property type="evidence" value="ECO:0007669"/>
    <property type="project" value="UniProtKB-SubCell"/>
</dbReference>
<dbReference type="GO" id="GO:0003723">
    <property type="term" value="F:RNA binding"/>
    <property type="evidence" value="ECO:0007669"/>
    <property type="project" value="UniProtKB-KW"/>
</dbReference>
<dbReference type="GO" id="GO:0009383">
    <property type="term" value="F:rRNA (cytosine-C5-)-methyltransferase activity"/>
    <property type="evidence" value="ECO:0007669"/>
    <property type="project" value="TreeGrafter"/>
</dbReference>
<dbReference type="GO" id="GO:0070475">
    <property type="term" value="P:rRNA base methylation"/>
    <property type="evidence" value="ECO:0007669"/>
    <property type="project" value="TreeGrafter"/>
</dbReference>
<dbReference type="CDD" id="cd02440">
    <property type="entry name" value="AdoMet_MTases"/>
    <property type="match status" value="1"/>
</dbReference>
<dbReference type="Gene3D" id="3.10.450.720">
    <property type="match status" value="1"/>
</dbReference>
<dbReference type="Gene3D" id="3.40.50.150">
    <property type="entry name" value="Vaccinia Virus protein VP39"/>
    <property type="match status" value="1"/>
</dbReference>
<dbReference type="HAMAP" id="MF_01579">
    <property type="entry name" value="16SrRNA_methyltr_F"/>
    <property type="match status" value="1"/>
</dbReference>
<dbReference type="InterPro" id="IPR031341">
    <property type="entry name" value="Methyltr_RsmF_N"/>
</dbReference>
<dbReference type="InterPro" id="IPR049560">
    <property type="entry name" value="MeTrfase_RsmB-F_NOP2_cat"/>
</dbReference>
<dbReference type="InterPro" id="IPR001678">
    <property type="entry name" value="MeTrfase_RsmB-F_NOP2_dom"/>
</dbReference>
<dbReference type="InterPro" id="IPR027391">
    <property type="entry name" value="Nol1_Nop2_Fmu_2"/>
</dbReference>
<dbReference type="InterPro" id="IPR011023">
    <property type="entry name" value="Nop2p"/>
</dbReference>
<dbReference type="InterPro" id="IPR023267">
    <property type="entry name" value="RCMT"/>
</dbReference>
<dbReference type="InterPro" id="IPR023545">
    <property type="entry name" value="rRNA_ssu_MeTfrase_F"/>
</dbReference>
<dbReference type="InterPro" id="IPR029063">
    <property type="entry name" value="SAM-dependent_MTases_sf"/>
</dbReference>
<dbReference type="InterPro" id="IPR048457">
    <property type="entry name" value="YebU_pre-PUA_dom"/>
</dbReference>
<dbReference type="NCBIfam" id="TIGR00446">
    <property type="entry name" value="nop2p"/>
    <property type="match status" value="1"/>
</dbReference>
<dbReference type="NCBIfam" id="NF008898">
    <property type="entry name" value="PRK11933.1"/>
    <property type="match status" value="1"/>
</dbReference>
<dbReference type="PANTHER" id="PTHR22807:SF30">
    <property type="entry name" value="28S RRNA (CYTOSINE(4447)-C(5))-METHYLTRANSFERASE-RELATED"/>
    <property type="match status" value="1"/>
</dbReference>
<dbReference type="PANTHER" id="PTHR22807">
    <property type="entry name" value="NOP2 YEAST -RELATED NOL1/NOP2/FMU SUN DOMAIN-CONTAINING"/>
    <property type="match status" value="1"/>
</dbReference>
<dbReference type="Pfam" id="PF01189">
    <property type="entry name" value="Methyltr_RsmB-F"/>
    <property type="match status" value="1"/>
</dbReference>
<dbReference type="Pfam" id="PF17125">
    <property type="entry name" value="Methyltr_RsmF_N"/>
    <property type="match status" value="1"/>
</dbReference>
<dbReference type="Pfam" id="PF13636">
    <property type="entry name" value="Methyltranf_PUA"/>
    <property type="match status" value="1"/>
</dbReference>
<dbReference type="Pfam" id="PF21150">
    <property type="entry name" value="YebU_pre-PUA_dom"/>
    <property type="match status" value="1"/>
</dbReference>
<dbReference type="PRINTS" id="PR02008">
    <property type="entry name" value="RCMTFAMILY"/>
</dbReference>
<dbReference type="SUPFAM" id="SSF53335">
    <property type="entry name" value="S-adenosyl-L-methionine-dependent methyltransferases"/>
    <property type="match status" value="1"/>
</dbReference>
<dbReference type="PROSITE" id="PS51686">
    <property type="entry name" value="SAM_MT_RSMB_NOP"/>
    <property type="match status" value="1"/>
</dbReference>
<proteinExistence type="inferred from homology"/>
<evidence type="ECO:0000255" key="1">
    <source>
        <dbReference type="HAMAP-Rule" id="MF_01579"/>
    </source>
</evidence>
<reference key="1">
    <citation type="submission" date="2006-12" db="EMBL/GenBank/DDBJ databases">
        <title>Complete sequence of Shewanella amazonensis SB2B.</title>
        <authorList>
            <consortium name="US DOE Joint Genome Institute"/>
            <person name="Copeland A."/>
            <person name="Lucas S."/>
            <person name="Lapidus A."/>
            <person name="Barry K."/>
            <person name="Detter J.C."/>
            <person name="Glavina del Rio T."/>
            <person name="Hammon N."/>
            <person name="Israni S."/>
            <person name="Dalin E."/>
            <person name="Tice H."/>
            <person name="Pitluck S."/>
            <person name="Munk A.C."/>
            <person name="Brettin T."/>
            <person name="Bruce D."/>
            <person name="Han C."/>
            <person name="Tapia R."/>
            <person name="Gilna P."/>
            <person name="Schmutz J."/>
            <person name="Larimer F."/>
            <person name="Land M."/>
            <person name="Hauser L."/>
            <person name="Kyrpides N."/>
            <person name="Mikhailova N."/>
            <person name="Fredrickson J."/>
            <person name="Richardson P."/>
        </authorList>
    </citation>
    <scope>NUCLEOTIDE SEQUENCE [LARGE SCALE GENOMIC DNA]</scope>
    <source>
        <strain>ATCC BAA-1098 / SB2B</strain>
    </source>
</reference>
<accession>A1S788</accession>
<keyword id="KW-0963">Cytoplasm</keyword>
<keyword id="KW-0489">Methyltransferase</keyword>
<keyword id="KW-1185">Reference proteome</keyword>
<keyword id="KW-0694">RNA-binding</keyword>
<keyword id="KW-0698">rRNA processing</keyword>
<keyword id="KW-0949">S-adenosyl-L-methionine</keyword>
<keyword id="KW-0808">Transferase</keyword>
<organism>
    <name type="scientific">Shewanella amazonensis (strain ATCC BAA-1098 / SB2B)</name>
    <dbReference type="NCBI Taxonomy" id="326297"/>
    <lineage>
        <taxon>Bacteria</taxon>
        <taxon>Pseudomonadati</taxon>
        <taxon>Pseudomonadota</taxon>
        <taxon>Gammaproteobacteria</taxon>
        <taxon>Alteromonadales</taxon>
        <taxon>Shewanellaceae</taxon>
        <taxon>Shewanella</taxon>
    </lineage>
</organism>